<reference evidence="4" key="1">
    <citation type="journal article" date="2008" name="Mol. Breed.">
        <title>The genome structure of the 1-FEH genes in wheat (Triticum aestivum L.): new markers to track stem carbohydrates and grain filling QTLs in breeding.</title>
        <authorList>
            <person name="Zhang J."/>
            <person name="Huang S."/>
            <person name="Fosu-Nyarko J."/>
            <person name="Dell B."/>
            <person name="McNeil M."/>
            <person name="Waters I."/>
            <person name="Moolhuijzen P."/>
            <person name="Conocono E."/>
            <person name="Appels R."/>
        </authorList>
        <dbReference type="AGRICOLA" id="IND44093987"/>
    </citation>
    <scope>NUCLEOTIDE SEQUENCE [GENOMIC DNA]</scope>
</reference>
<comment type="function">
    <text evidence="2">Hydrolyzes inulin-type beta-(2,1)-fructans. May play a role as a beta-(2,1)-trimmer during graminan biosynthesis (By similarity).</text>
</comment>
<comment type="catalytic activity">
    <reaction evidence="2">
        <text>Hydrolysis of terminal, non-reducing (2-&gt;1)-linked beta-D-fructofuranose residues in fructans.</text>
        <dbReference type="EC" id="3.2.1.153"/>
    </reaction>
</comment>
<comment type="activity regulation">
    <text evidence="2">Inhibited by sucrose.</text>
</comment>
<comment type="similarity">
    <text evidence="3">Belongs to the glycosyl hydrolase 32 family.</text>
</comment>
<gene>
    <name evidence="2" type="primary">1-FEH</name>
</gene>
<keyword id="KW-1015">Disulfide bond</keyword>
<keyword id="KW-0325">Glycoprotein</keyword>
<keyword id="KW-0326">Glycosidase</keyword>
<keyword id="KW-0378">Hydrolase</keyword>
<keyword id="KW-1185">Reference proteome</keyword>
<keyword id="KW-0732">Signal</keyword>
<evidence type="ECO:0000250" key="1">
    <source>
        <dbReference type="UniProtKB" id="Q43866"/>
    </source>
</evidence>
<evidence type="ECO:0000250" key="2">
    <source>
        <dbReference type="UniProtKB" id="Q84PN8"/>
    </source>
</evidence>
<evidence type="ECO:0000255" key="3"/>
<evidence type="ECO:0000312" key="4">
    <source>
        <dbReference type="EMBL" id="ACI16118.1"/>
    </source>
</evidence>
<sequence length="597" mass="66677">MAQAWAFLLPVLVFGSYMTSLFFPTYISGPLCGGDGGGRSLFLCAQAPKDQDPSPAVSTMYKTAFHFQPAKNWMNDPSGPMYFNGFYHEFYQYNPNGPIFGDIVWGHSVSTDLVNWIGLEPALVRDTPSDIDGCWTGSVTILPGGKPVIIYTGGDKDQHQAQNIAFPKNRSDPYLREWIKAANNPVLRPDEPGMNSIEFRDPTTGWIGPDGLWRMAVGGELNGYSAALLYKSEDFLNWTKVDHPLYSHNGSNMWECPDFFAVLPGNNAGLDLSAAIPQGAKHALKMSVDSVDKYMIGVYDLQRDAFVPDNVVDDRRLWLRIDYGTFYASKSFFDSNKNRRIIWGWSRETDSPSDDLEKGWAGLHTIPRTIWLADDGKQLLQWPVEEIESLRTNEISHQGIELNKGDLFEIKEVDAFQADVEIGFELASIDDADPFDPSWLLDPEKHCGEAGASVPGGIGPFGLVILASDNMDEHTEVYFRVYKSEEKYMVLMCSDLRRSSLRPDLEKPAYGGFFEFDLEKERKISLRTLIDRSAVESFGGGGRVCITSRVYPAVLADVGRAHIYAFNNGSATVRVPQLSAWTMRKAQVNVEKGWSAI</sequence>
<dbReference type="EC" id="3.2.1.153"/>
<dbReference type="EMBL" id="FJ184992">
    <property type="protein sequence ID" value="ACI16118.1"/>
    <property type="molecule type" value="Genomic_DNA"/>
</dbReference>
<dbReference type="SMR" id="B6DZD0"/>
<dbReference type="STRING" id="4572.B6DZD0"/>
<dbReference type="CAZy" id="GH32">
    <property type="family name" value="Glycoside Hydrolase Family 32"/>
</dbReference>
<dbReference type="GlyCosmos" id="B6DZD0">
    <property type="glycosylation" value="4 sites, No reported glycans"/>
</dbReference>
<dbReference type="eggNOG" id="KOG0228">
    <property type="taxonomic scope" value="Eukaryota"/>
</dbReference>
<dbReference type="Proteomes" id="UP000015106">
    <property type="component" value="Unassembled WGS sequence"/>
</dbReference>
<dbReference type="GO" id="GO:0033948">
    <property type="term" value="F:fructan beta-(2,1)-fructosidase activity"/>
    <property type="evidence" value="ECO:0007669"/>
    <property type="project" value="UniProtKB-EC"/>
</dbReference>
<dbReference type="GO" id="GO:0005975">
    <property type="term" value="P:carbohydrate metabolic process"/>
    <property type="evidence" value="ECO:0007669"/>
    <property type="project" value="InterPro"/>
</dbReference>
<dbReference type="CDD" id="cd18624">
    <property type="entry name" value="GH32_Fruct1-like"/>
    <property type="match status" value="1"/>
</dbReference>
<dbReference type="FunFam" id="2.115.10.20:FF:000001">
    <property type="entry name" value="Beta-fructofuranosidase, insoluble isoenzyme CWINV1"/>
    <property type="match status" value="1"/>
</dbReference>
<dbReference type="FunFam" id="2.60.120.560:FF:000002">
    <property type="entry name" value="Beta-fructofuranosidase, insoluble isoenzyme CWINV1"/>
    <property type="match status" value="1"/>
</dbReference>
<dbReference type="Gene3D" id="2.60.120.560">
    <property type="entry name" value="Exo-inulinase, domain 1"/>
    <property type="match status" value="1"/>
</dbReference>
<dbReference type="Gene3D" id="2.115.10.20">
    <property type="entry name" value="Glycosyl hydrolase domain, family 43"/>
    <property type="match status" value="1"/>
</dbReference>
<dbReference type="InterPro" id="IPR013320">
    <property type="entry name" value="ConA-like_dom_sf"/>
</dbReference>
<dbReference type="InterPro" id="IPR050551">
    <property type="entry name" value="Fructan_Metab_Enzymes"/>
</dbReference>
<dbReference type="InterPro" id="IPR001362">
    <property type="entry name" value="Glyco_hydro_32"/>
</dbReference>
<dbReference type="InterPro" id="IPR013189">
    <property type="entry name" value="Glyco_hydro_32_C"/>
</dbReference>
<dbReference type="InterPro" id="IPR013148">
    <property type="entry name" value="Glyco_hydro_32_N"/>
</dbReference>
<dbReference type="InterPro" id="IPR023296">
    <property type="entry name" value="Glyco_hydro_beta-prop_sf"/>
</dbReference>
<dbReference type="PANTHER" id="PTHR31953">
    <property type="entry name" value="BETA-FRUCTOFURANOSIDASE, INSOLUBLE ISOENZYME CWINV1-RELATED"/>
    <property type="match status" value="1"/>
</dbReference>
<dbReference type="Pfam" id="PF08244">
    <property type="entry name" value="Glyco_hydro_32C"/>
    <property type="match status" value="1"/>
</dbReference>
<dbReference type="Pfam" id="PF00251">
    <property type="entry name" value="Glyco_hydro_32N"/>
    <property type="match status" value="1"/>
</dbReference>
<dbReference type="SMART" id="SM00640">
    <property type="entry name" value="Glyco_32"/>
    <property type="match status" value="1"/>
</dbReference>
<dbReference type="SUPFAM" id="SSF75005">
    <property type="entry name" value="Arabinanase/levansucrase/invertase"/>
    <property type="match status" value="1"/>
</dbReference>
<dbReference type="SUPFAM" id="SSF49899">
    <property type="entry name" value="Concanavalin A-like lectins/glucanases"/>
    <property type="match status" value="1"/>
</dbReference>
<feature type="signal peptide" evidence="3">
    <location>
        <begin position="1"/>
        <end position="15"/>
    </location>
</feature>
<feature type="chain" id="PRO_0000395559" description="Fructan 1-exohydrolase" evidence="3">
    <location>
        <begin position="16"/>
        <end position="597"/>
    </location>
</feature>
<feature type="active site" evidence="1">
    <location>
        <position position="76"/>
    </location>
</feature>
<feature type="glycosylation site" description="N-linked (GlcNAc...) asparagine" evidence="3">
    <location>
        <position position="169"/>
    </location>
</feature>
<feature type="glycosylation site" description="N-linked (GlcNAc...) asparagine" evidence="3">
    <location>
        <position position="237"/>
    </location>
</feature>
<feature type="glycosylation site" description="N-linked (GlcNAc...) asparagine" evidence="3">
    <location>
        <position position="249"/>
    </location>
</feature>
<feature type="glycosylation site" description="N-linked (GlcNAc...) asparagine" evidence="3">
    <location>
        <position position="568"/>
    </location>
</feature>
<feature type="disulfide bond" evidence="1">
    <location>
        <begin position="447"/>
        <end position="493"/>
    </location>
</feature>
<name>1FEH_TRIUA</name>
<protein>
    <recommendedName>
        <fullName>Fructan 1-exohydrolase</fullName>
        <ecNumber>3.2.1.153</ecNumber>
    </recommendedName>
</protein>
<organism>
    <name type="scientific">Triticum urartu</name>
    <name type="common">Red wild einkorn</name>
    <name type="synonym">Crithodium urartu</name>
    <dbReference type="NCBI Taxonomy" id="4572"/>
    <lineage>
        <taxon>Eukaryota</taxon>
        <taxon>Viridiplantae</taxon>
        <taxon>Streptophyta</taxon>
        <taxon>Embryophyta</taxon>
        <taxon>Tracheophyta</taxon>
        <taxon>Spermatophyta</taxon>
        <taxon>Magnoliopsida</taxon>
        <taxon>Liliopsida</taxon>
        <taxon>Poales</taxon>
        <taxon>Poaceae</taxon>
        <taxon>BOP clade</taxon>
        <taxon>Pooideae</taxon>
        <taxon>Triticodae</taxon>
        <taxon>Triticeae</taxon>
        <taxon>Triticinae</taxon>
        <taxon>Triticum</taxon>
    </lineage>
</organism>
<proteinExistence type="inferred from homology"/>
<accession>B6DZD0</accession>